<accession>A8F985</accession>
<dbReference type="EMBL" id="CP000813">
    <property type="protein sequence ID" value="ABV60802.1"/>
    <property type="molecule type" value="Genomic_DNA"/>
</dbReference>
<dbReference type="RefSeq" id="WP_012008703.1">
    <property type="nucleotide sequence ID" value="NZ_VEIS01000020.1"/>
</dbReference>
<dbReference type="SMR" id="A8F985"/>
<dbReference type="STRING" id="315750.BPUM_0102"/>
<dbReference type="GeneID" id="5619344"/>
<dbReference type="KEGG" id="bpu:BPUM_0102"/>
<dbReference type="eggNOG" id="COG0087">
    <property type="taxonomic scope" value="Bacteria"/>
</dbReference>
<dbReference type="HOGENOM" id="CLU_044142_4_1_9"/>
<dbReference type="OrthoDB" id="9806135at2"/>
<dbReference type="Proteomes" id="UP000001355">
    <property type="component" value="Chromosome"/>
</dbReference>
<dbReference type="GO" id="GO:0022625">
    <property type="term" value="C:cytosolic large ribosomal subunit"/>
    <property type="evidence" value="ECO:0007669"/>
    <property type="project" value="TreeGrafter"/>
</dbReference>
<dbReference type="GO" id="GO:0019843">
    <property type="term" value="F:rRNA binding"/>
    <property type="evidence" value="ECO:0007669"/>
    <property type="project" value="UniProtKB-UniRule"/>
</dbReference>
<dbReference type="GO" id="GO:0003735">
    <property type="term" value="F:structural constituent of ribosome"/>
    <property type="evidence" value="ECO:0007669"/>
    <property type="project" value="InterPro"/>
</dbReference>
<dbReference type="GO" id="GO:0006412">
    <property type="term" value="P:translation"/>
    <property type="evidence" value="ECO:0007669"/>
    <property type="project" value="UniProtKB-UniRule"/>
</dbReference>
<dbReference type="FunFam" id="2.40.30.10:FF:000004">
    <property type="entry name" value="50S ribosomal protein L3"/>
    <property type="match status" value="1"/>
</dbReference>
<dbReference type="FunFam" id="3.30.160.810:FF:000002">
    <property type="entry name" value="50S ribosomal protein L3"/>
    <property type="match status" value="1"/>
</dbReference>
<dbReference type="Gene3D" id="3.30.160.810">
    <property type="match status" value="1"/>
</dbReference>
<dbReference type="Gene3D" id="2.40.30.10">
    <property type="entry name" value="Translation factors"/>
    <property type="match status" value="1"/>
</dbReference>
<dbReference type="HAMAP" id="MF_01325_B">
    <property type="entry name" value="Ribosomal_uL3_B"/>
    <property type="match status" value="1"/>
</dbReference>
<dbReference type="InterPro" id="IPR000597">
    <property type="entry name" value="Ribosomal_uL3"/>
</dbReference>
<dbReference type="InterPro" id="IPR019927">
    <property type="entry name" value="Ribosomal_uL3_bac/org-type"/>
</dbReference>
<dbReference type="InterPro" id="IPR019926">
    <property type="entry name" value="Ribosomal_uL3_CS"/>
</dbReference>
<dbReference type="InterPro" id="IPR009000">
    <property type="entry name" value="Transl_B-barrel_sf"/>
</dbReference>
<dbReference type="NCBIfam" id="TIGR03625">
    <property type="entry name" value="L3_bact"/>
    <property type="match status" value="1"/>
</dbReference>
<dbReference type="PANTHER" id="PTHR11229">
    <property type="entry name" value="50S RIBOSOMAL PROTEIN L3"/>
    <property type="match status" value="1"/>
</dbReference>
<dbReference type="PANTHER" id="PTHR11229:SF16">
    <property type="entry name" value="LARGE RIBOSOMAL SUBUNIT PROTEIN UL3C"/>
    <property type="match status" value="1"/>
</dbReference>
<dbReference type="Pfam" id="PF00297">
    <property type="entry name" value="Ribosomal_L3"/>
    <property type="match status" value="1"/>
</dbReference>
<dbReference type="SUPFAM" id="SSF50447">
    <property type="entry name" value="Translation proteins"/>
    <property type="match status" value="1"/>
</dbReference>
<dbReference type="PROSITE" id="PS00474">
    <property type="entry name" value="RIBOSOMAL_L3"/>
    <property type="match status" value="1"/>
</dbReference>
<proteinExistence type="inferred from homology"/>
<gene>
    <name evidence="1" type="primary">rplC</name>
    <name type="ordered locus">BPUM_0102</name>
</gene>
<sequence length="209" mass="22601">MTKGILGRKIGMTQVFAENGDLIPVTVVEAAANVVLQKKTTDTDGYEAIQIGFDDKREKLSNKPEKGHVAKAETAPKRFVKELRGAELDAYEVGQEVKVDIFANGDIVDVTGTSKGKGFQGAIKRHGQSRGPMTHGSRYHRRPGSMGPVDPNRVFKGKLLPGRMGGEQITVQNLEIVKVDAERNLLLIKGNVPGAKKSLVTVKSAVKSK</sequence>
<feature type="chain" id="PRO_1000067559" description="Large ribosomal subunit protein uL3">
    <location>
        <begin position="1"/>
        <end position="209"/>
    </location>
</feature>
<feature type="region of interest" description="Disordered" evidence="2">
    <location>
        <begin position="118"/>
        <end position="150"/>
    </location>
</feature>
<keyword id="KW-0687">Ribonucleoprotein</keyword>
<keyword id="KW-0689">Ribosomal protein</keyword>
<keyword id="KW-0694">RNA-binding</keyword>
<keyword id="KW-0699">rRNA-binding</keyword>
<comment type="function">
    <text evidence="1">One of the primary rRNA binding proteins, it binds directly near the 3'-end of the 23S rRNA, where it nucleates assembly of the 50S subunit.</text>
</comment>
<comment type="subunit">
    <text evidence="1">Part of the 50S ribosomal subunit. Forms a cluster with proteins L14 and L19.</text>
</comment>
<comment type="similarity">
    <text evidence="1">Belongs to the universal ribosomal protein uL3 family.</text>
</comment>
<organism>
    <name type="scientific">Bacillus pumilus (strain SAFR-032)</name>
    <dbReference type="NCBI Taxonomy" id="315750"/>
    <lineage>
        <taxon>Bacteria</taxon>
        <taxon>Bacillati</taxon>
        <taxon>Bacillota</taxon>
        <taxon>Bacilli</taxon>
        <taxon>Bacillales</taxon>
        <taxon>Bacillaceae</taxon>
        <taxon>Bacillus</taxon>
    </lineage>
</organism>
<evidence type="ECO:0000255" key="1">
    <source>
        <dbReference type="HAMAP-Rule" id="MF_01325"/>
    </source>
</evidence>
<evidence type="ECO:0000256" key="2">
    <source>
        <dbReference type="SAM" id="MobiDB-lite"/>
    </source>
</evidence>
<evidence type="ECO:0000305" key="3"/>
<reference key="1">
    <citation type="journal article" date="2007" name="PLoS ONE">
        <title>Paradoxical DNA repair and peroxide resistance gene conservation in Bacillus pumilus SAFR-032.</title>
        <authorList>
            <person name="Gioia J."/>
            <person name="Yerrapragada S."/>
            <person name="Qin X."/>
            <person name="Jiang H."/>
            <person name="Igboeli O.C."/>
            <person name="Muzny D."/>
            <person name="Dugan-Rocha S."/>
            <person name="Ding Y."/>
            <person name="Hawes A."/>
            <person name="Liu W."/>
            <person name="Perez L."/>
            <person name="Kovar C."/>
            <person name="Dinh H."/>
            <person name="Lee S."/>
            <person name="Nazareth L."/>
            <person name="Blyth P."/>
            <person name="Holder M."/>
            <person name="Buhay C."/>
            <person name="Tirumalai M.R."/>
            <person name="Liu Y."/>
            <person name="Dasgupta I."/>
            <person name="Bokhetache L."/>
            <person name="Fujita M."/>
            <person name="Karouia F."/>
            <person name="Eswara Moorthy P."/>
            <person name="Siefert J."/>
            <person name="Uzman A."/>
            <person name="Buzumbo P."/>
            <person name="Verma A."/>
            <person name="Zwiya H."/>
            <person name="McWilliams B.D."/>
            <person name="Olowu A."/>
            <person name="Clinkenbeard K.D."/>
            <person name="Newcombe D."/>
            <person name="Golebiewski L."/>
            <person name="Petrosino J.F."/>
            <person name="Nicholson W.L."/>
            <person name="Fox G.E."/>
            <person name="Venkateswaran K."/>
            <person name="Highlander S.K."/>
            <person name="Weinstock G.M."/>
        </authorList>
    </citation>
    <scope>NUCLEOTIDE SEQUENCE [LARGE SCALE GENOMIC DNA]</scope>
    <source>
        <strain>SAFR-032</strain>
    </source>
</reference>
<protein>
    <recommendedName>
        <fullName evidence="1">Large ribosomal subunit protein uL3</fullName>
    </recommendedName>
    <alternativeName>
        <fullName evidence="3">50S ribosomal protein L3</fullName>
    </alternativeName>
</protein>
<name>RL3_BACP2</name>